<comment type="function">
    <text evidence="6">May play a synaptic role at the postsynaptic lipid rafts possibly through interaction with CAMK2A.</text>
</comment>
<comment type="subunit">
    <text evidence="4">Interacts with CAMK2A.</text>
</comment>
<comment type="subcellular location">
    <subcellularLocation>
        <location evidence="1">Cytoplasm</location>
    </subcellularLocation>
    <subcellularLocation>
        <location evidence="4">Synapse</location>
        <location evidence="4">Synaptosome</location>
    </subcellularLocation>
    <subcellularLocation>
        <location evidence="4">Membrane raft</location>
    </subcellularLocation>
    <subcellularLocation>
        <location evidence="4">Postsynaptic density</location>
    </subcellularLocation>
    <text evidence="1 4">In neurons, localizes to postsynaptic lipid rafts (PubMed:15659234). In myocardial and skeletal muscle cells, localizes to the cytoplasm adjacent to the inner cell membrane, polarized to one end of the myocyte (By similarity).</text>
</comment>
<comment type="alternative products">
    <event type="alternative splicing"/>
    <isoform>
        <id>Q920K5-1</id>
        <name>1</name>
        <name>1-6-8</name>
        <sequence type="displayed"/>
    </isoform>
    <isoform>
        <id>Q920K5-2</id>
        <name>2</name>
        <name>1-8</name>
        <sequence type="described" ref="VSP_020208"/>
    </isoform>
</comment>
<comment type="tissue specificity">
    <text evidence="3 4">Predominantly expressed in the brain (at protein level) (PubMed:11707601, PubMed:15659234). Within the brain, found in most of forebrain structures, including the cerebral cortex, hippocampal formation, olfactory bulb, anterior olfactory nuclei, piriform cortex, tenia tecta and amygdaloid nuclei. Not detected in glial cells (PubMed:15659234).</text>
</comment>
<comment type="developmental stage">
    <text evidence="4">In the developing forebrain, barely detected at postnatal day 1. Expression increases from the first week after birth. High levels are reached during 2 and 3 weeks after birth and slightly decrease at 6 weeks after birth. This expression pattern parallels synaptogenesis.</text>
</comment>
<comment type="PTM">
    <text evidence="4">Palmitoylation and myristoylation target the protein to the lipid rafts.</text>
</comment>
<proteinExistence type="evidence at protein level"/>
<keyword id="KW-0025">Alternative splicing</keyword>
<keyword id="KW-0963">Cytoplasm</keyword>
<keyword id="KW-0449">Lipoprotein</keyword>
<keyword id="KW-0472">Membrane</keyword>
<keyword id="KW-0519">Myristate</keyword>
<keyword id="KW-0564">Palmitate</keyword>
<keyword id="KW-1185">Reference proteome</keyword>
<keyword id="KW-0770">Synapse</keyword>
<keyword id="KW-0771">Synaptosome</keyword>
<sequence length="145" mass="15475">MGCGGSRADAIEPRYYESWTRETESTWLTYTDSDALPSAAATDSGPEAGGLHAGVLEDGPSSNGVLRPAAPGGIANPEKKMNCGTQCPNSQSLSSGPLTQKQNGLWTTEAKRDAKRMSAREVAISVTENIRQMDRSKRVTKNCIN</sequence>
<name>BAALC_RAT</name>
<gene>
    <name type="primary">Baalc</name>
</gene>
<accession>Q920K5</accession>
<accession>Q790N3</accession>
<evidence type="ECO:0000250" key="1">
    <source>
        <dbReference type="UniProtKB" id="Q8VHV1"/>
    </source>
</evidence>
<evidence type="ECO:0000256" key="2">
    <source>
        <dbReference type="SAM" id="MobiDB-lite"/>
    </source>
</evidence>
<evidence type="ECO:0000269" key="3">
    <source>
    </source>
</evidence>
<evidence type="ECO:0000269" key="4">
    <source>
    </source>
</evidence>
<evidence type="ECO:0000303" key="5">
    <source>
    </source>
</evidence>
<evidence type="ECO:0000303" key="6">
    <source>
    </source>
</evidence>
<evidence type="ECO:0000305" key="7">
    <source>
    </source>
</evidence>
<feature type="initiator methionine" description="Removed" evidence="7">
    <location>
        <position position="1"/>
    </location>
</feature>
<feature type="chain" id="PRO_0000248208" description="Brain and acute leukemia cytoplasmic protein">
    <location>
        <begin position="2"/>
        <end position="145"/>
    </location>
</feature>
<feature type="region of interest" description="Interaction with CAMK2A" evidence="4">
    <location>
        <begin position="3"/>
        <end position="35"/>
    </location>
</feature>
<feature type="region of interest" description="Disordered" evidence="2">
    <location>
        <begin position="36"/>
        <end position="113"/>
    </location>
</feature>
<feature type="compositionally biased region" description="Polar residues" evidence="2">
    <location>
        <begin position="83"/>
        <end position="106"/>
    </location>
</feature>
<feature type="lipid moiety-binding region" description="N-myristoyl glycine" evidence="4">
    <location>
        <position position="2"/>
    </location>
</feature>
<feature type="lipid moiety-binding region" description="S-palmitoyl cysteine" evidence="4">
    <location>
        <position position="3"/>
    </location>
</feature>
<feature type="splice variant" id="VSP_020208" description="In isoform 2." evidence="5">
    <location>
        <begin position="55"/>
        <end position="145"/>
    </location>
</feature>
<feature type="mutagenesis site" description="Abolishes myristoylation." evidence="4">
    <original>G</original>
    <variation>A</variation>
    <location>
        <position position="2"/>
    </location>
</feature>
<feature type="mutagenesis site" description="Abolishes palmitoylation." evidence="4">
    <original>C</original>
    <variation>A</variation>
    <location>
        <position position="3"/>
    </location>
</feature>
<reference key="1">
    <citation type="journal article" date="2001" name="Proc. Natl. Acad. Sci. U.S.A.">
        <title>BAALC, the human member of a novel mammalian neuroectoderm gene lineage, is implicated in hematopoiesis and acute leukemia.</title>
        <authorList>
            <person name="Tanner S.M."/>
            <person name="Austin J.L."/>
            <person name="Leone G."/>
            <person name="Rush L.J."/>
            <person name="Plass C."/>
            <person name="Heinonen K."/>
            <person name="Mrozek K."/>
            <person name="Sill H."/>
            <person name="Knuutila S."/>
            <person name="Kolitz J.E."/>
            <person name="Archer K.J."/>
            <person name="Caligiuri M.A."/>
            <person name="Bloomfield C.D."/>
            <person name="de La Chapelle A."/>
        </authorList>
    </citation>
    <scope>NUCLEOTIDE SEQUENCE [MRNA] (ISOFORMS 1 AND 2)</scope>
    <scope>TISSUE SPECIFICITY</scope>
    <source>
        <strain>Sprague-Dawley</strain>
    </source>
</reference>
<reference key="2">
    <citation type="journal article" date="2005" name="J. Neurochem.">
        <title>BAALC 1-6-8 protein is targeted to postsynaptic lipid rafts by its N-terminal myristoylation and palmitoylation, and interacts with a, but not b, subunit of Ca2+/calmodulin-dependent protein kinase II.</title>
        <authorList>
            <person name="Wang X."/>
            <person name="Tian Q.-B."/>
            <person name="Okano A."/>
            <person name="Sakagami H."/>
            <person name="Moon I.S."/>
            <person name="Kondo H."/>
            <person name="Endo S."/>
            <person name="Suzuki T."/>
        </authorList>
    </citation>
    <scope>NUCLEOTIDE SEQUENCE [MRNA] (ISOFORM 1)</scope>
    <scope>FUNCTION</scope>
    <scope>INTERACTION WITH CAMK2A</scope>
    <scope>SUBCELLULAR LOCATION</scope>
    <scope>TISSUE SPECIFICITY</scope>
    <scope>DEVELOPMENTAL STAGE</scope>
    <scope>MYRISTOYLATION AT GLY-2</scope>
    <scope>PALMITOYLATION AT CYS-3</scope>
    <scope>MUTAGENESIS OF GLY-2 AND CYS-3</scope>
</reference>
<organism>
    <name type="scientific">Rattus norvegicus</name>
    <name type="common">Rat</name>
    <dbReference type="NCBI Taxonomy" id="10116"/>
    <lineage>
        <taxon>Eukaryota</taxon>
        <taxon>Metazoa</taxon>
        <taxon>Chordata</taxon>
        <taxon>Craniata</taxon>
        <taxon>Vertebrata</taxon>
        <taxon>Euteleostomi</taxon>
        <taxon>Mammalia</taxon>
        <taxon>Eutheria</taxon>
        <taxon>Euarchontoglires</taxon>
        <taxon>Glires</taxon>
        <taxon>Rodentia</taxon>
        <taxon>Myomorpha</taxon>
        <taxon>Muroidea</taxon>
        <taxon>Muridae</taxon>
        <taxon>Murinae</taxon>
        <taxon>Rattus</taxon>
    </lineage>
</organism>
<dbReference type="EMBL" id="AF371321">
    <property type="protein sequence ID" value="AAL50517.1"/>
    <property type="molecule type" value="mRNA"/>
</dbReference>
<dbReference type="EMBL" id="AF371325">
    <property type="protein sequence ID" value="AAL50521.1"/>
    <property type="molecule type" value="mRNA"/>
</dbReference>
<dbReference type="EMBL" id="AB073318">
    <property type="protein sequence ID" value="BAB70507.1"/>
    <property type="molecule type" value="mRNA"/>
</dbReference>
<dbReference type="RefSeq" id="NP_658907.1">
    <molecule id="Q920K5-1"/>
    <property type="nucleotide sequence ID" value="NM_144762.3"/>
</dbReference>
<dbReference type="RefSeq" id="XP_063118999.1">
    <molecule id="Q920K5-2"/>
    <property type="nucleotide sequence ID" value="XM_063262929.1"/>
</dbReference>
<dbReference type="FunCoup" id="Q920K5">
    <property type="interactions" value="679"/>
</dbReference>
<dbReference type="STRING" id="10116.ENSRNOP00000006411"/>
<dbReference type="iPTMnet" id="Q920K5"/>
<dbReference type="PhosphoSitePlus" id="Q920K5"/>
<dbReference type="SwissPalm" id="Q920K5"/>
<dbReference type="PaxDb" id="10116-ENSRNOP00000006411"/>
<dbReference type="Ensembl" id="ENSRNOT00000006411.7">
    <molecule id="Q920K5-1"/>
    <property type="protein sequence ID" value="ENSRNOP00000006411.4"/>
    <property type="gene ID" value="ENSRNOG00000004697.8"/>
</dbReference>
<dbReference type="GeneID" id="140720"/>
<dbReference type="KEGG" id="rno:140720"/>
<dbReference type="UCSC" id="RGD:628703">
    <molecule id="Q920K5-1"/>
    <property type="organism name" value="rat"/>
</dbReference>
<dbReference type="AGR" id="RGD:628703"/>
<dbReference type="CTD" id="79870"/>
<dbReference type="RGD" id="628703">
    <property type="gene designation" value="Baalc"/>
</dbReference>
<dbReference type="eggNOG" id="KOG4119">
    <property type="taxonomic scope" value="Eukaryota"/>
</dbReference>
<dbReference type="GeneTree" id="ENSGT00390000013853"/>
<dbReference type="HOGENOM" id="CLU_135096_0_0_1"/>
<dbReference type="InParanoid" id="Q920K5"/>
<dbReference type="OMA" id="QNGFRTT"/>
<dbReference type="OrthoDB" id="9940597at2759"/>
<dbReference type="PhylomeDB" id="Q920K5"/>
<dbReference type="TreeFam" id="TF330767"/>
<dbReference type="PRO" id="PR:Q920K5"/>
<dbReference type="Proteomes" id="UP000002494">
    <property type="component" value="Chromosome 7"/>
</dbReference>
<dbReference type="Bgee" id="ENSRNOG00000004697">
    <property type="expression patterns" value="Expressed in Ammon's horn and 10 other cell types or tissues"/>
</dbReference>
<dbReference type="GO" id="GO:0005737">
    <property type="term" value="C:cytoplasm"/>
    <property type="evidence" value="ECO:0000266"/>
    <property type="project" value="RGD"/>
</dbReference>
<dbReference type="GO" id="GO:0045121">
    <property type="term" value="C:membrane raft"/>
    <property type="evidence" value="ECO:0007669"/>
    <property type="project" value="UniProtKB-SubCell"/>
</dbReference>
<dbReference type="GO" id="GO:0043005">
    <property type="term" value="C:neuron projection"/>
    <property type="evidence" value="ECO:0007669"/>
    <property type="project" value="UniProtKB-KW"/>
</dbReference>
<dbReference type="GO" id="GO:0014069">
    <property type="term" value="C:postsynaptic density"/>
    <property type="evidence" value="ECO:0007669"/>
    <property type="project" value="UniProtKB-SubCell"/>
</dbReference>
<dbReference type="GO" id="GO:0016528">
    <property type="term" value="C:sarcoplasm"/>
    <property type="evidence" value="ECO:0000266"/>
    <property type="project" value="RGD"/>
</dbReference>
<dbReference type="InterPro" id="IPR009728">
    <property type="entry name" value="BAALC"/>
</dbReference>
<dbReference type="PANTHER" id="PTHR14731">
    <property type="entry name" value="BRAIN AND ACUTE LEUKEMIA CYTOPLASMIC PROTEIN"/>
    <property type="match status" value="1"/>
</dbReference>
<dbReference type="PANTHER" id="PTHR14731:SF0">
    <property type="entry name" value="BRAIN AND ACUTE LEUKEMIA CYTOPLASMIC PROTEIN"/>
    <property type="match status" value="1"/>
</dbReference>
<dbReference type="Pfam" id="PF06989">
    <property type="entry name" value="BAALC_N"/>
    <property type="match status" value="1"/>
</dbReference>
<protein>
    <recommendedName>
        <fullName>Brain and acute leukemia cytoplasmic protein</fullName>
    </recommendedName>
</protein>